<sequence>MAGHSKWANTRHRKAAQDAKRGKIFTKIIRELVTAAKLGGGDPDANPRLRAAIDKALSNNMTRDTLNRAIARGVGGDDDANMETIIYEGYGPGGTAIMIECLSDNRNRTVAEVRHAFSKCGGNLGTDGSVAYLFSKKGVISFEKGDEDTIMEAALEAGAEDVVTYDDGAIDVYTAWEEMGKVRDALEAAGLKADSAEVSMIPSTKADMDAETAPKLMRLIDMLEDCDDVQEVYHNGEISDEVAATL</sequence>
<comment type="subcellular location">
    <subcellularLocation>
        <location evidence="1">Cytoplasm</location>
    </subcellularLocation>
</comment>
<comment type="similarity">
    <text evidence="1">Belongs to the TACO1 family.</text>
</comment>
<name>YEBC_ECOL6</name>
<organism>
    <name type="scientific">Escherichia coli O6:H1 (strain CFT073 / ATCC 700928 / UPEC)</name>
    <dbReference type="NCBI Taxonomy" id="199310"/>
    <lineage>
        <taxon>Bacteria</taxon>
        <taxon>Pseudomonadati</taxon>
        <taxon>Pseudomonadota</taxon>
        <taxon>Gammaproteobacteria</taxon>
        <taxon>Enterobacterales</taxon>
        <taxon>Enterobacteriaceae</taxon>
        <taxon>Escherichia</taxon>
    </lineage>
</organism>
<accession>P67175</accession>
<accession>Q8FGR1</accession>
<accession>Q8XCI8</accession>
<proteinExistence type="inferred from homology"/>
<dbReference type="EMBL" id="AE014075">
    <property type="protein sequence ID" value="AAN80735.1"/>
    <property type="molecule type" value="Genomic_DNA"/>
</dbReference>
<dbReference type="RefSeq" id="WP_000907234.1">
    <property type="nucleotide sequence ID" value="NZ_CP051263.1"/>
</dbReference>
<dbReference type="SMR" id="P67175"/>
<dbReference type="STRING" id="199310.c2278"/>
<dbReference type="KEGG" id="ecc:c2278"/>
<dbReference type="eggNOG" id="COG0217">
    <property type="taxonomic scope" value="Bacteria"/>
</dbReference>
<dbReference type="HOGENOM" id="CLU_062974_2_2_6"/>
<dbReference type="BioCyc" id="ECOL199310:C2278-MONOMER"/>
<dbReference type="Proteomes" id="UP000001410">
    <property type="component" value="Chromosome"/>
</dbReference>
<dbReference type="GO" id="GO:0005829">
    <property type="term" value="C:cytosol"/>
    <property type="evidence" value="ECO:0007669"/>
    <property type="project" value="TreeGrafter"/>
</dbReference>
<dbReference type="GO" id="GO:0003677">
    <property type="term" value="F:DNA binding"/>
    <property type="evidence" value="ECO:0007669"/>
    <property type="project" value="UniProtKB-UniRule"/>
</dbReference>
<dbReference type="GO" id="GO:0006355">
    <property type="term" value="P:regulation of DNA-templated transcription"/>
    <property type="evidence" value="ECO:0007669"/>
    <property type="project" value="UniProtKB-UniRule"/>
</dbReference>
<dbReference type="FunFam" id="1.10.10.200:FF:000001">
    <property type="entry name" value="Probable transcriptional regulatory protein YebC"/>
    <property type="match status" value="1"/>
</dbReference>
<dbReference type="FunFam" id="3.30.70.980:FF:000002">
    <property type="entry name" value="Probable transcriptional regulatory protein YebC"/>
    <property type="match status" value="1"/>
</dbReference>
<dbReference type="Gene3D" id="1.10.10.200">
    <property type="match status" value="1"/>
</dbReference>
<dbReference type="Gene3D" id="3.30.70.980">
    <property type="match status" value="2"/>
</dbReference>
<dbReference type="HAMAP" id="MF_00693">
    <property type="entry name" value="Transcrip_reg_TACO1"/>
    <property type="match status" value="1"/>
</dbReference>
<dbReference type="InterPro" id="IPR017856">
    <property type="entry name" value="Integrase-like_N"/>
</dbReference>
<dbReference type="InterPro" id="IPR048300">
    <property type="entry name" value="TACO1_YebC-like_2nd/3rd_dom"/>
</dbReference>
<dbReference type="InterPro" id="IPR049083">
    <property type="entry name" value="TACO1_YebC_N"/>
</dbReference>
<dbReference type="InterPro" id="IPR002876">
    <property type="entry name" value="Transcrip_reg_TACO1-like"/>
</dbReference>
<dbReference type="InterPro" id="IPR026564">
    <property type="entry name" value="Transcrip_reg_TACO1-like_dom3"/>
</dbReference>
<dbReference type="InterPro" id="IPR029072">
    <property type="entry name" value="YebC-like"/>
</dbReference>
<dbReference type="NCBIfam" id="NF001030">
    <property type="entry name" value="PRK00110.1"/>
    <property type="match status" value="1"/>
</dbReference>
<dbReference type="NCBIfam" id="NF009044">
    <property type="entry name" value="PRK12378.1"/>
    <property type="match status" value="1"/>
</dbReference>
<dbReference type="NCBIfam" id="TIGR01033">
    <property type="entry name" value="YebC/PmpR family DNA-binding transcriptional regulator"/>
    <property type="match status" value="1"/>
</dbReference>
<dbReference type="PANTHER" id="PTHR12532:SF6">
    <property type="entry name" value="TRANSCRIPTIONAL REGULATORY PROTEIN YEBC-RELATED"/>
    <property type="match status" value="1"/>
</dbReference>
<dbReference type="PANTHER" id="PTHR12532">
    <property type="entry name" value="TRANSLATIONAL ACTIVATOR OF CYTOCHROME C OXIDASE 1"/>
    <property type="match status" value="1"/>
</dbReference>
<dbReference type="Pfam" id="PF20772">
    <property type="entry name" value="TACO1_YebC_N"/>
    <property type="match status" value="1"/>
</dbReference>
<dbReference type="Pfam" id="PF01709">
    <property type="entry name" value="Transcrip_reg"/>
    <property type="match status" value="1"/>
</dbReference>
<dbReference type="SUPFAM" id="SSF75625">
    <property type="entry name" value="YebC-like"/>
    <property type="match status" value="1"/>
</dbReference>
<evidence type="ECO:0000255" key="1">
    <source>
        <dbReference type="HAMAP-Rule" id="MF_00693"/>
    </source>
</evidence>
<evidence type="ECO:0000256" key="2">
    <source>
        <dbReference type="SAM" id="MobiDB-lite"/>
    </source>
</evidence>
<protein>
    <recommendedName>
        <fullName evidence="1">Probable transcriptional regulatory protein YebC</fullName>
    </recommendedName>
</protein>
<feature type="chain" id="PRO_0000175800" description="Probable transcriptional regulatory protein YebC">
    <location>
        <begin position="1"/>
        <end position="246"/>
    </location>
</feature>
<feature type="region of interest" description="Disordered" evidence="2">
    <location>
        <begin position="1"/>
        <end position="20"/>
    </location>
</feature>
<gene>
    <name evidence="1" type="primary">yebC</name>
    <name type="ordered locus">c2278</name>
</gene>
<keyword id="KW-0963">Cytoplasm</keyword>
<keyword id="KW-0238">DNA-binding</keyword>
<keyword id="KW-1185">Reference proteome</keyword>
<keyword id="KW-0804">Transcription</keyword>
<keyword id="KW-0805">Transcription regulation</keyword>
<reference key="1">
    <citation type="journal article" date="2002" name="Proc. Natl. Acad. Sci. U.S.A.">
        <title>Extensive mosaic structure revealed by the complete genome sequence of uropathogenic Escherichia coli.</title>
        <authorList>
            <person name="Welch R.A."/>
            <person name="Burland V."/>
            <person name="Plunkett G. III"/>
            <person name="Redford P."/>
            <person name="Roesch P."/>
            <person name="Rasko D."/>
            <person name="Buckles E.L."/>
            <person name="Liou S.-R."/>
            <person name="Boutin A."/>
            <person name="Hackett J."/>
            <person name="Stroud D."/>
            <person name="Mayhew G.F."/>
            <person name="Rose D.J."/>
            <person name="Zhou S."/>
            <person name="Schwartz D.C."/>
            <person name="Perna N.T."/>
            <person name="Mobley H.L.T."/>
            <person name="Donnenberg M.S."/>
            <person name="Blattner F.R."/>
        </authorList>
    </citation>
    <scope>NUCLEOTIDE SEQUENCE [LARGE SCALE GENOMIC DNA]</scope>
    <source>
        <strain>CFT073 / ATCC 700928 / UPEC</strain>
    </source>
</reference>